<accession>P83835</accession>
<accession>P58444</accession>
<accession>P58450</accession>
<name>CYO12_VIOAR</name>
<sequence>GLPICGETCVGGTCNTPGCSCSWPVCTRN</sequence>
<keyword id="KW-0903">Direct protein sequencing</keyword>
<keyword id="KW-1015">Disulfide bond</keyword>
<keyword id="KW-0960">Knottin</keyword>
<keyword id="KW-0611">Plant defense</keyword>
<comment type="function">
    <text evidence="1 3">Probably participates in a plant defense mechanism. Has cytotoxic activity against human lymphoma U-937 GTB and human myeloma RPMI-8226/s cell lines.</text>
</comment>
<comment type="domain">
    <text>The presence of a 'disulfide through disulfide knot' structurally defines this protein as a knottin.</text>
</comment>
<comment type="PTM">
    <text>This is a cyclic peptide.</text>
</comment>
<comment type="mass spectrometry"/>
<comment type="mass spectrometry"/>
<comment type="similarity">
    <text evidence="1">Belongs to the cyclotide family. Moebius subfamily.</text>
</comment>
<comment type="caution">
    <text evidence="4">This peptide is cyclic. The start position was chosen by similarity to OAK1 (kalata-B1) for which the DNA sequence is known.</text>
</comment>
<feature type="peptide" id="PRO_0000043618" description="Varv peptide E">
    <location>
        <begin position="1"/>
        <end position="29"/>
    </location>
</feature>
<feature type="disulfide bond">
    <location>
        <begin position="5"/>
        <end position="19"/>
    </location>
</feature>
<feature type="disulfide bond">
    <location>
        <begin position="9"/>
        <end position="21"/>
    </location>
</feature>
<feature type="disulfide bond">
    <location>
        <begin position="14"/>
        <end position="26"/>
    </location>
</feature>
<feature type="cross-link" description="Cyclopeptide (Gly-Asn)">
    <location>
        <begin position="1"/>
        <end position="29"/>
    </location>
</feature>
<organism>
    <name type="scientific">Viola arvensis</name>
    <name type="common">European field pansy</name>
    <name type="synonym">Field violet</name>
    <dbReference type="NCBI Taxonomy" id="97415"/>
    <lineage>
        <taxon>Eukaryota</taxon>
        <taxon>Viridiplantae</taxon>
        <taxon>Streptophyta</taxon>
        <taxon>Embryophyta</taxon>
        <taxon>Tracheophyta</taxon>
        <taxon>Spermatophyta</taxon>
        <taxon>Magnoliopsida</taxon>
        <taxon>eudicotyledons</taxon>
        <taxon>Gunneridae</taxon>
        <taxon>Pentapetalae</taxon>
        <taxon>rosids</taxon>
        <taxon>fabids</taxon>
        <taxon>Malpighiales</taxon>
        <taxon>Violaceae</taxon>
        <taxon>Viola</taxon>
        <taxon>Viola subgen. Viola</taxon>
        <taxon>Viola sect. Melanium</taxon>
        <taxon>Viola subsect. Bracteolatae</taxon>
    </lineage>
</organism>
<proteinExistence type="evidence at protein level"/>
<evidence type="ECO:0000255" key="1">
    <source>
        <dbReference type="PROSITE-ProRule" id="PRU00395"/>
    </source>
</evidence>
<evidence type="ECO:0000269" key="2">
    <source>
    </source>
</evidence>
<evidence type="ECO:0000269" key="3">
    <source>
    </source>
</evidence>
<evidence type="ECO:0000305" key="4"/>
<dbReference type="SMR" id="P83835"/>
<dbReference type="GO" id="GO:0006952">
    <property type="term" value="P:defense response"/>
    <property type="evidence" value="ECO:0000314"/>
    <property type="project" value="UniProtKB"/>
</dbReference>
<dbReference type="InterPro" id="IPR005535">
    <property type="entry name" value="Cyclotide"/>
</dbReference>
<dbReference type="InterPro" id="IPR012324">
    <property type="entry name" value="Cyclotide_moebius_CS"/>
</dbReference>
<dbReference type="InterPro" id="IPR036146">
    <property type="entry name" value="Cyclotide_sf"/>
</dbReference>
<dbReference type="Pfam" id="PF03784">
    <property type="entry name" value="Cyclotide"/>
    <property type="match status" value="1"/>
</dbReference>
<dbReference type="PIRSF" id="PIRSF037891">
    <property type="entry name" value="Cycloviolacin"/>
    <property type="match status" value="1"/>
</dbReference>
<dbReference type="SUPFAM" id="SSF57038">
    <property type="entry name" value="Cyclotides"/>
    <property type="match status" value="1"/>
</dbReference>
<dbReference type="PROSITE" id="PS51052">
    <property type="entry name" value="CYCLOTIDE"/>
    <property type="match status" value="1"/>
</dbReference>
<dbReference type="PROSITE" id="PS60009">
    <property type="entry name" value="CYCLOTIDE_MOEBIUS"/>
    <property type="match status" value="1"/>
</dbReference>
<protein>
    <recommendedName>
        <fullName>Varv peptide E</fullName>
    </recommendedName>
</protein>
<reference key="1">
    <citation type="journal article" date="1999" name="J. Nat. Prod.">
        <title>Seven novel macrocyclic polypeptides from Viola arvensis.</title>
        <authorList>
            <person name="Goeransson U."/>
            <person name="Luijendijk T."/>
            <person name="Johansson S."/>
            <person name="Bohlin L."/>
            <person name="Claeson P."/>
        </authorList>
    </citation>
    <scope>PROTEIN SEQUENCE</scope>
    <scope>MASS SPECTROMETRY</scope>
</reference>
<reference key="2">
    <citation type="journal article" date="2004" name="J. Nat. Prod.">
        <title>Cytotoxic cyclotides from Viola tricolor.</title>
        <authorList>
            <person name="Svangard E."/>
            <person name="Goransson U."/>
            <person name="Hocaoglu Z."/>
            <person name="Gullbo J."/>
            <person name="Larsson R."/>
            <person name="Claeson P."/>
            <person name="Bohlin L."/>
        </authorList>
    </citation>
    <scope>PROTEIN SEQUENCE</scope>
    <scope>FUNCTION</scope>
    <scope>MASS SPECTROMETRY</scope>
</reference>